<evidence type="ECO:0000255" key="1">
    <source>
        <dbReference type="HAMAP-Rule" id="MF_01554"/>
    </source>
</evidence>
<comment type="function">
    <text evidence="1">Catalyzes the conversion of glucosamine-6-phosphate to glucosamine-1-phosphate.</text>
</comment>
<comment type="catalytic activity">
    <reaction evidence="1">
        <text>alpha-D-glucosamine 1-phosphate = D-glucosamine 6-phosphate</text>
        <dbReference type="Rhea" id="RHEA:23424"/>
        <dbReference type="ChEBI" id="CHEBI:58516"/>
        <dbReference type="ChEBI" id="CHEBI:58725"/>
        <dbReference type="EC" id="5.4.2.10"/>
    </reaction>
</comment>
<comment type="cofactor">
    <cofactor evidence="1">
        <name>Mg(2+)</name>
        <dbReference type="ChEBI" id="CHEBI:18420"/>
    </cofactor>
    <text evidence="1">Binds 1 Mg(2+) ion per subunit.</text>
</comment>
<comment type="PTM">
    <text evidence="1">Activated by phosphorylation.</text>
</comment>
<comment type="similarity">
    <text evidence="1">Belongs to the phosphohexose mutase family.</text>
</comment>
<proteinExistence type="inferred from homology"/>
<feature type="chain" id="PRO_0000305666" description="Phosphoglucosamine mutase">
    <location>
        <begin position="1"/>
        <end position="447"/>
    </location>
</feature>
<feature type="active site" description="Phosphoserine intermediate" evidence="1">
    <location>
        <position position="103"/>
    </location>
</feature>
<feature type="binding site" description="via phosphate group" evidence="1">
    <location>
        <position position="103"/>
    </location>
    <ligand>
        <name>Mg(2+)</name>
        <dbReference type="ChEBI" id="CHEBI:18420"/>
    </ligand>
</feature>
<feature type="binding site" evidence="1">
    <location>
        <position position="242"/>
    </location>
    <ligand>
        <name>Mg(2+)</name>
        <dbReference type="ChEBI" id="CHEBI:18420"/>
    </ligand>
</feature>
<feature type="binding site" evidence="1">
    <location>
        <position position="244"/>
    </location>
    <ligand>
        <name>Mg(2+)</name>
        <dbReference type="ChEBI" id="CHEBI:18420"/>
    </ligand>
</feature>
<feature type="binding site" evidence="1">
    <location>
        <position position="246"/>
    </location>
    <ligand>
        <name>Mg(2+)</name>
        <dbReference type="ChEBI" id="CHEBI:18420"/>
    </ligand>
</feature>
<feature type="modified residue" description="Phosphoserine" evidence="1">
    <location>
        <position position="103"/>
    </location>
</feature>
<dbReference type="EC" id="5.4.2.10" evidence="1"/>
<dbReference type="EMBL" id="CP000143">
    <property type="protein sequence ID" value="ABA78012.1"/>
    <property type="molecule type" value="Genomic_DNA"/>
</dbReference>
<dbReference type="RefSeq" id="WP_011337039.1">
    <property type="nucleotide sequence ID" value="NC_007493.2"/>
</dbReference>
<dbReference type="RefSeq" id="YP_351913.1">
    <property type="nucleotide sequence ID" value="NC_007493.2"/>
</dbReference>
<dbReference type="SMR" id="Q3J5C2"/>
<dbReference type="STRING" id="272943.RSP_1863"/>
<dbReference type="EnsemblBacteria" id="ABA78012">
    <property type="protein sequence ID" value="ABA78012"/>
    <property type="gene ID" value="RSP_1863"/>
</dbReference>
<dbReference type="GeneID" id="3719130"/>
<dbReference type="KEGG" id="rsp:RSP_1863"/>
<dbReference type="PATRIC" id="fig|272943.9.peg.752"/>
<dbReference type="eggNOG" id="COG1109">
    <property type="taxonomic scope" value="Bacteria"/>
</dbReference>
<dbReference type="OrthoDB" id="9803322at2"/>
<dbReference type="PhylomeDB" id="Q3J5C2"/>
<dbReference type="Proteomes" id="UP000002703">
    <property type="component" value="Chromosome 1"/>
</dbReference>
<dbReference type="GO" id="GO:0005829">
    <property type="term" value="C:cytosol"/>
    <property type="evidence" value="ECO:0007669"/>
    <property type="project" value="TreeGrafter"/>
</dbReference>
<dbReference type="GO" id="GO:0000287">
    <property type="term" value="F:magnesium ion binding"/>
    <property type="evidence" value="ECO:0007669"/>
    <property type="project" value="UniProtKB-UniRule"/>
</dbReference>
<dbReference type="GO" id="GO:0008966">
    <property type="term" value="F:phosphoglucosamine mutase activity"/>
    <property type="evidence" value="ECO:0007669"/>
    <property type="project" value="UniProtKB-UniRule"/>
</dbReference>
<dbReference type="GO" id="GO:0004615">
    <property type="term" value="F:phosphomannomutase activity"/>
    <property type="evidence" value="ECO:0007669"/>
    <property type="project" value="TreeGrafter"/>
</dbReference>
<dbReference type="GO" id="GO:0005975">
    <property type="term" value="P:carbohydrate metabolic process"/>
    <property type="evidence" value="ECO:0007669"/>
    <property type="project" value="InterPro"/>
</dbReference>
<dbReference type="GO" id="GO:0009252">
    <property type="term" value="P:peptidoglycan biosynthetic process"/>
    <property type="evidence" value="ECO:0007669"/>
    <property type="project" value="TreeGrafter"/>
</dbReference>
<dbReference type="GO" id="GO:0006048">
    <property type="term" value="P:UDP-N-acetylglucosamine biosynthetic process"/>
    <property type="evidence" value="ECO:0007669"/>
    <property type="project" value="TreeGrafter"/>
</dbReference>
<dbReference type="CDD" id="cd05802">
    <property type="entry name" value="GlmM"/>
    <property type="match status" value="1"/>
</dbReference>
<dbReference type="FunFam" id="3.30.310.50:FF:000001">
    <property type="entry name" value="Phosphoglucosamine mutase"/>
    <property type="match status" value="1"/>
</dbReference>
<dbReference type="FunFam" id="3.40.120.10:FF:000001">
    <property type="entry name" value="Phosphoglucosamine mutase"/>
    <property type="match status" value="1"/>
</dbReference>
<dbReference type="FunFam" id="3.40.120.10:FF:000002">
    <property type="entry name" value="Phosphoglucosamine mutase"/>
    <property type="match status" value="1"/>
</dbReference>
<dbReference type="Gene3D" id="3.40.120.10">
    <property type="entry name" value="Alpha-D-Glucose-1,6-Bisphosphate, subunit A, domain 3"/>
    <property type="match status" value="3"/>
</dbReference>
<dbReference type="Gene3D" id="3.30.310.50">
    <property type="entry name" value="Alpha-D-phosphohexomutase, C-terminal domain"/>
    <property type="match status" value="1"/>
</dbReference>
<dbReference type="HAMAP" id="MF_01554_B">
    <property type="entry name" value="GlmM_B"/>
    <property type="match status" value="1"/>
</dbReference>
<dbReference type="InterPro" id="IPR005844">
    <property type="entry name" value="A-D-PHexomutase_a/b/a-I"/>
</dbReference>
<dbReference type="InterPro" id="IPR016055">
    <property type="entry name" value="A-D-PHexomutase_a/b/a-I/II/III"/>
</dbReference>
<dbReference type="InterPro" id="IPR005845">
    <property type="entry name" value="A-D-PHexomutase_a/b/a-II"/>
</dbReference>
<dbReference type="InterPro" id="IPR005846">
    <property type="entry name" value="A-D-PHexomutase_a/b/a-III"/>
</dbReference>
<dbReference type="InterPro" id="IPR005843">
    <property type="entry name" value="A-D-PHexomutase_C"/>
</dbReference>
<dbReference type="InterPro" id="IPR036900">
    <property type="entry name" value="A-D-PHexomutase_C_sf"/>
</dbReference>
<dbReference type="InterPro" id="IPR016066">
    <property type="entry name" value="A-D-PHexomutase_CS"/>
</dbReference>
<dbReference type="InterPro" id="IPR005841">
    <property type="entry name" value="Alpha-D-phosphohexomutase_SF"/>
</dbReference>
<dbReference type="InterPro" id="IPR006352">
    <property type="entry name" value="GlmM_bact"/>
</dbReference>
<dbReference type="InterPro" id="IPR050060">
    <property type="entry name" value="Phosphoglucosamine_mutase"/>
</dbReference>
<dbReference type="NCBIfam" id="TIGR01455">
    <property type="entry name" value="glmM"/>
    <property type="match status" value="1"/>
</dbReference>
<dbReference type="NCBIfam" id="NF008139">
    <property type="entry name" value="PRK10887.1"/>
    <property type="match status" value="1"/>
</dbReference>
<dbReference type="PANTHER" id="PTHR42946:SF1">
    <property type="entry name" value="PHOSPHOGLUCOMUTASE (ALPHA-D-GLUCOSE-1,6-BISPHOSPHATE-DEPENDENT)"/>
    <property type="match status" value="1"/>
</dbReference>
<dbReference type="PANTHER" id="PTHR42946">
    <property type="entry name" value="PHOSPHOHEXOSE MUTASE"/>
    <property type="match status" value="1"/>
</dbReference>
<dbReference type="Pfam" id="PF02878">
    <property type="entry name" value="PGM_PMM_I"/>
    <property type="match status" value="1"/>
</dbReference>
<dbReference type="Pfam" id="PF02879">
    <property type="entry name" value="PGM_PMM_II"/>
    <property type="match status" value="1"/>
</dbReference>
<dbReference type="Pfam" id="PF02880">
    <property type="entry name" value="PGM_PMM_III"/>
    <property type="match status" value="1"/>
</dbReference>
<dbReference type="Pfam" id="PF00408">
    <property type="entry name" value="PGM_PMM_IV"/>
    <property type="match status" value="1"/>
</dbReference>
<dbReference type="PRINTS" id="PR00509">
    <property type="entry name" value="PGMPMM"/>
</dbReference>
<dbReference type="SUPFAM" id="SSF55957">
    <property type="entry name" value="Phosphoglucomutase, C-terminal domain"/>
    <property type="match status" value="1"/>
</dbReference>
<dbReference type="SUPFAM" id="SSF53738">
    <property type="entry name" value="Phosphoglucomutase, first 3 domains"/>
    <property type="match status" value="3"/>
</dbReference>
<dbReference type="PROSITE" id="PS00710">
    <property type="entry name" value="PGM_PMM"/>
    <property type="match status" value="1"/>
</dbReference>
<reference key="1">
    <citation type="submission" date="2005-09" db="EMBL/GenBank/DDBJ databases">
        <title>Complete sequence of chromosome 1 of Rhodobacter sphaeroides 2.4.1.</title>
        <authorList>
            <person name="Copeland A."/>
            <person name="Lucas S."/>
            <person name="Lapidus A."/>
            <person name="Barry K."/>
            <person name="Detter J.C."/>
            <person name="Glavina T."/>
            <person name="Hammon N."/>
            <person name="Israni S."/>
            <person name="Pitluck S."/>
            <person name="Richardson P."/>
            <person name="Mackenzie C."/>
            <person name="Choudhary M."/>
            <person name="Larimer F."/>
            <person name="Hauser L.J."/>
            <person name="Land M."/>
            <person name="Donohue T.J."/>
            <person name="Kaplan S."/>
        </authorList>
    </citation>
    <scope>NUCLEOTIDE SEQUENCE [LARGE SCALE GENOMIC DNA]</scope>
    <source>
        <strain>ATCC 17023 / DSM 158 / JCM 6121 / CCUG 31486 / LMG 2827 / NBRC 12203 / NCIMB 8253 / ATH 2.4.1.</strain>
    </source>
</reference>
<keyword id="KW-0413">Isomerase</keyword>
<keyword id="KW-0460">Magnesium</keyword>
<keyword id="KW-0479">Metal-binding</keyword>
<keyword id="KW-0597">Phosphoprotein</keyword>
<keyword id="KW-1185">Reference proteome</keyword>
<protein>
    <recommendedName>
        <fullName evidence="1">Phosphoglucosamine mutase</fullName>
        <ecNumber evidence="1">5.4.2.10</ecNumber>
    </recommendedName>
</protein>
<organism>
    <name type="scientific">Cereibacter sphaeroides (strain ATCC 17023 / DSM 158 / JCM 6121 / CCUG 31486 / LMG 2827 / NBRC 12203 / NCIMB 8253 / ATH 2.4.1.)</name>
    <name type="common">Rhodobacter sphaeroides</name>
    <dbReference type="NCBI Taxonomy" id="272943"/>
    <lineage>
        <taxon>Bacteria</taxon>
        <taxon>Pseudomonadati</taxon>
        <taxon>Pseudomonadota</taxon>
        <taxon>Alphaproteobacteria</taxon>
        <taxon>Rhodobacterales</taxon>
        <taxon>Paracoccaceae</taxon>
        <taxon>Cereibacter</taxon>
    </lineage>
</organism>
<gene>
    <name evidence="1" type="primary">glmM</name>
    <name type="ordered locus">RHOS4_04440</name>
    <name type="ORF">RSP_1863</name>
</gene>
<name>GLMM_CERS4</name>
<sequence length="447" mass="47520">MTRKLFGTDGVRGTANTHPMTAEMALRLGAAAGRYFRPVGAGSPRVVIGKDTRLSGYMLENALTAGLTSTGMNVLLLGPVPTPAVGFLTRSMRAALGVMISASHNPHEDNGIKFFGPDGFKLSDEAEAEIEAILAGEIQPAQPGNIGRAKRIEDGRGRYQEYCKTTFPSGLRLDGLKVVIDCANGAAYRAAPEVLWELGAEVIPVGVEPNGKNINLRCGSTHPQAAGEAVRAHGADVGICLDGDADRVIILDETGKEADGDQIMALFAARWADEGRLRDGTLVATVMSNLGLERFLGARGLRLERTPVGDRYVVEAMRRGGWNLGGEQSGHIVMTDFATTGDGLLAGLQFLAAMAQTGRRASDLARSFETVPQLLQNVRYAAGQEPLKAPGVQAVIRDAEVRLNGAGRLLIRKSGTEPLIRVMAECEDEALLRDVVEEIVAAVRDAA</sequence>
<accession>Q3J5C2</accession>